<name>NU2C1_LIRTU</name>
<sequence length="510" mass="56649">MIWHVQNENFILDSTRIFMKAFHLLLFHGSFIFPECILIFGLILLLMIDSTSDQKDIPWLYFISSTSLVMSITALLFRWREEPMISFSGNFQTNNFNEIFQFLILLCSTLCIPLSVEYIECTEMAITEFLLFVLTATLGGMFLCGANDSITIFVAPECFSLCSYLLSGYTKRDVRSNEATTKYLLMGGASSSILVHGFSWLYGSSGGEIELQEIVNGLIKTQMYNSPGISIALIFITVGIGFKLSPAPSHQWTPDVYEGSPTPVVAFLSVTSKVAASASATRIFDIPFYFSSNEWHLLLEILAILSMILGNLIAITQTSMKRMLAYSSIGQIGYVIIGIIVGDSNDGYASMITYMLFYISMNLGTFARIVSFGLRTGTDNIRDYAGLYTKDPFLALSSALCLLSLGGLPPLAGFFGKLHLFWCGWQAGLYFLVSIGLLTSVVSIYYYLKIIKLLMTGRNQEITPHVRNYRRSPLRSNNSIELSMIVCVIASTIPGISMNPIIAIAQDTLF</sequence>
<proteinExistence type="inferred from homology"/>
<evidence type="ECO:0000255" key="1">
    <source>
        <dbReference type="HAMAP-Rule" id="MF_00445"/>
    </source>
</evidence>
<geneLocation type="chloroplast"/>
<gene>
    <name evidence="1" type="primary">ndhB1</name>
</gene>
<accession>P0CC84</accession>
<accession>Q0G9F9</accession>
<feature type="chain" id="PRO_0000275600" description="NAD(P)H-quinone oxidoreductase subunit 2 A, chloroplastic">
    <location>
        <begin position="1"/>
        <end position="510"/>
    </location>
</feature>
<feature type="transmembrane region" description="Helical" evidence="1">
    <location>
        <begin position="24"/>
        <end position="44"/>
    </location>
</feature>
<feature type="transmembrane region" description="Helical" evidence="1">
    <location>
        <begin position="57"/>
        <end position="77"/>
    </location>
</feature>
<feature type="transmembrane region" description="Helical" evidence="1">
    <location>
        <begin position="99"/>
        <end position="119"/>
    </location>
</feature>
<feature type="transmembrane region" description="Helical" evidence="1">
    <location>
        <begin position="124"/>
        <end position="144"/>
    </location>
</feature>
<feature type="transmembrane region" description="Helical" evidence="1">
    <location>
        <begin position="150"/>
        <end position="170"/>
    </location>
</feature>
<feature type="transmembrane region" description="Helical" evidence="1">
    <location>
        <begin position="183"/>
        <end position="203"/>
    </location>
</feature>
<feature type="transmembrane region" description="Helical" evidence="1">
    <location>
        <begin position="227"/>
        <end position="247"/>
    </location>
</feature>
<feature type="transmembrane region" description="Helical" evidence="1">
    <location>
        <begin position="295"/>
        <end position="315"/>
    </location>
</feature>
<feature type="transmembrane region" description="Helical" evidence="1">
    <location>
        <begin position="323"/>
        <end position="343"/>
    </location>
</feature>
<feature type="transmembrane region" description="Helical" evidence="1">
    <location>
        <begin position="347"/>
        <end position="367"/>
    </location>
</feature>
<feature type="transmembrane region" description="Helical" evidence="1">
    <location>
        <begin position="395"/>
        <end position="415"/>
    </location>
</feature>
<feature type="transmembrane region" description="Helical" evidence="1">
    <location>
        <begin position="418"/>
        <end position="438"/>
    </location>
</feature>
<feature type="transmembrane region" description="Helical" evidence="1">
    <location>
        <begin position="484"/>
        <end position="504"/>
    </location>
</feature>
<reference key="1">
    <citation type="journal article" date="2006" name="BMC Evol. Biol.">
        <title>Complete plastid genome sequences of Drimys, Liriodendron, and Piper: implications for the phylogenetic relationships of magnoliids.</title>
        <authorList>
            <person name="Cai Z."/>
            <person name="Penaflor C."/>
            <person name="Kuehl J.V."/>
            <person name="Leebens-Mack J."/>
            <person name="Carlson J.E."/>
            <person name="dePamphilis C.W."/>
            <person name="Boore J.L."/>
            <person name="Jansen R.K."/>
        </authorList>
    </citation>
    <scope>NUCLEOTIDE SEQUENCE [LARGE SCALE GENOMIC DNA]</scope>
</reference>
<comment type="function">
    <text evidence="1">NDH shuttles electrons from NAD(P)H:plastoquinone, via FMN and iron-sulfur (Fe-S) centers, to quinones in the photosynthetic chain and possibly in a chloroplast respiratory chain. The immediate electron acceptor for the enzyme in this species is believed to be plastoquinone. Couples the redox reaction to proton translocation, and thus conserves the redox energy in a proton gradient.</text>
</comment>
<comment type="catalytic activity">
    <reaction evidence="1">
        <text>a plastoquinone + NADH + (n+1) H(+)(in) = a plastoquinol + NAD(+) + n H(+)(out)</text>
        <dbReference type="Rhea" id="RHEA:42608"/>
        <dbReference type="Rhea" id="RHEA-COMP:9561"/>
        <dbReference type="Rhea" id="RHEA-COMP:9562"/>
        <dbReference type="ChEBI" id="CHEBI:15378"/>
        <dbReference type="ChEBI" id="CHEBI:17757"/>
        <dbReference type="ChEBI" id="CHEBI:57540"/>
        <dbReference type="ChEBI" id="CHEBI:57945"/>
        <dbReference type="ChEBI" id="CHEBI:62192"/>
    </reaction>
</comment>
<comment type="catalytic activity">
    <reaction evidence="1">
        <text>a plastoquinone + NADPH + (n+1) H(+)(in) = a plastoquinol + NADP(+) + n H(+)(out)</text>
        <dbReference type="Rhea" id="RHEA:42612"/>
        <dbReference type="Rhea" id="RHEA-COMP:9561"/>
        <dbReference type="Rhea" id="RHEA-COMP:9562"/>
        <dbReference type="ChEBI" id="CHEBI:15378"/>
        <dbReference type="ChEBI" id="CHEBI:17757"/>
        <dbReference type="ChEBI" id="CHEBI:57783"/>
        <dbReference type="ChEBI" id="CHEBI:58349"/>
        <dbReference type="ChEBI" id="CHEBI:62192"/>
    </reaction>
</comment>
<comment type="subunit">
    <text evidence="1">NDH is composed of at least 16 different subunits, 5 of which are encoded in the nucleus.</text>
</comment>
<comment type="subcellular location">
    <subcellularLocation>
        <location evidence="1">Plastid</location>
        <location evidence="1">Chloroplast thylakoid membrane</location>
        <topology evidence="1">Multi-pass membrane protein</topology>
    </subcellularLocation>
</comment>
<comment type="similarity">
    <text evidence="1">Belongs to the complex I subunit 2 family.</text>
</comment>
<protein>
    <recommendedName>
        <fullName evidence="1">NAD(P)H-quinone oxidoreductase subunit 2 A, chloroplastic</fullName>
        <ecNumber evidence="1">7.1.1.-</ecNumber>
    </recommendedName>
    <alternativeName>
        <fullName evidence="1">NAD(P)H dehydrogenase, subunit 2 A</fullName>
    </alternativeName>
    <alternativeName>
        <fullName evidence="1">NADH-plastoquinone oxidoreductase subunit 2 A</fullName>
    </alternativeName>
</protein>
<dbReference type="EC" id="7.1.1.-" evidence="1"/>
<dbReference type="EMBL" id="DQ899947">
    <property type="protein sequence ID" value="ABI32554.1"/>
    <property type="molecule type" value="Genomic_DNA"/>
</dbReference>
<dbReference type="SMR" id="P0CC84"/>
<dbReference type="GO" id="GO:0009535">
    <property type="term" value="C:chloroplast thylakoid membrane"/>
    <property type="evidence" value="ECO:0007669"/>
    <property type="project" value="UniProtKB-SubCell"/>
</dbReference>
<dbReference type="GO" id="GO:0008137">
    <property type="term" value="F:NADH dehydrogenase (ubiquinone) activity"/>
    <property type="evidence" value="ECO:0007669"/>
    <property type="project" value="InterPro"/>
</dbReference>
<dbReference type="GO" id="GO:0048038">
    <property type="term" value="F:quinone binding"/>
    <property type="evidence" value="ECO:0007669"/>
    <property type="project" value="UniProtKB-KW"/>
</dbReference>
<dbReference type="GO" id="GO:0042773">
    <property type="term" value="P:ATP synthesis coupled electron transport"/>
    <property type="evidence" value="ECO:0007669"/>
    <property type="project" value="InterPro"/>
</dbReference>
<dbReference type="GO" id="GO:0019684">
    <property type="term" value="P:photosynthesis, light reaction"/>
    <property type="evidence" value="ECO:0007669"/>
    <property type="project" value="UniProtKB-UniRule"/>
</dbReference>
<dbReference type="HAMAP" id="MF_00445">
    <property type="entry name" value="NDH1_NuoN_1"/>
    <property type="match status" value="1"/>
</dbReference>
<dbReference type="InterPro" id="IPR010096">
    <property type="entry name" value="NADH-Q_OxRdtase_suN/2"/>
</dbReference>
<dbReference type="InterPro" id="IPR001750">
    <property type="entry name" value="ND/Mrp_TM"/>
</dbReference>
<dbReference type="InterPro" id="IPR045693">
    <property type="entry name" value="Ndh2_N"/>
</dbReference>
<dbReference type="NCBIfam" id="TIGR01770">
    <property type="entry name" value="NDH_I_N"/>
    <property type="match status" value="1"/>
</dbReference>
<dbReference type="NCBIfam" id="NF002701">
    <property type="entry name" value="PRK02504.1"/>
    <property type="match status" value="1"/>
</dbReference>
<dbReference type="PANTHER" id="PTHR22773">
    <property type="entry name" value="NADH DEHYDROGENASE"/>
    <property type="match status" value="1"/>
</dbReference>
<dbReference type="Pfam" id="PF19530">
    <property type="entry name" value="Ndh2_N"/>
    <property type="match status" value="1"/>
</dbReference>
<dbReference type="Pfam" id="PF00361">
    <property type="entry name" value="Proton_antipo_M"/>
    <property type="match status" value="1"/>
</dbReference>
<dbReference type="PRINTS" id="PR01434">
    <property type="entry name" value="NADHDHGNASE5"/>
</dbReference>
<keyword id="KW-0150">Chloroplast</keyword>
<keyword id="KW-0472">Membrane</keyword>
<keyword id="KW-0520">NAD</keyword>
<keyword id="KW-0521">NADP</keyword>
<keyword id="KW-0934">Plastid</keyword>
<keyword id="KW-0618">Plastoquinone</keyword>
<keyword id="KW-0874">Quinone</keyword>
<keyword id="KW-0793">Thylakoid</keyword>
<keyword id="KW-1278">Translocase</keyword>
<keyword id="KW-0812">Transmembrane</keyword>
<keyword id="KW-1133">Transmembrane helix</keyword>
<keyword id="KW-0813">Transport</keyword>
<organism>
    <name type="scientific">Liriodendron tulipifera</name>
    <name type="common">Tuliptree</name>
    <name type="synonym">Tulip poplar</name>
    <dbReference type="NCBI Taxonomy" id="3415"/>
    <lineage>
        <taxon>Eukaryota</taxon>
        <taxon>Viridiplantae</taxon>
        <taxon>Streptophyta</taxon>
        <taxon>Embryophyta</taxon>
        <taxon>Tracheophyta</taxon>
        <taxon>Spermatophyta</taxon>
        <taxon>Magnoliopsida</taxon>
        <taxon>Magnoliidae</taxon>
        <taxon>Magnoliales</taxon>
        <taxon>Magnoliaceae</taxon>
        <taxon>Liriodendron</taxon>
    </lineage>
</organism>